<protein>
    <recommendedName>
        <fullName evidence="1">Tryptophan synthase beta chain</fullName>
        <ecNumber evidence="1">4.2.1.20</ecNumber>
    </recommendedName>
</protein>
<gene>
    <name evidence="1" type="primary">trpB</name>
    <name type="ordered locus">Avi_0020</name>
</gene>
<evidence type="ECO:0000255" key="1">
    <source>
        <dbReference type="HAMAP-Rule" id="MF_00133"/>
    </source>
</evidence>
<reference key="1">
    <citation type="journal article" date="2009" name="J. Bacteriol.">
        <title>Genome sequences of three Agrobacterium biovars help elucidate the evolution of multichromosome genomes in bacteria.</title>
        <authorList>
            <person name="Slater S.C."/>
            <person name="Goldman B.S."/>
            <person name="Goodner B."/>
            <person name="Setubal J.C."/>
            <person name="Farrand S.K."/>
            <person name="Nester E.W."/>
            <person name="Burr T.J."/>
            <person name="Banta L."/>
            <person name="Dickerman A.W."/>
            <person name="Paulsen I."/>
            <person name="Otten L."/>
            <person name="Suen G."/>
            <person name="Welch R."/>
            <person name="Almeida N.F."/>
            <person name="Arnold F."/>
            <person name="Burton O.T."/>
            <person name="Du Z."/>
            <person name="Ewing A."/>
            <person name="Godsy E."/>
            <person name="Heisel S."/>
            <person name="Houmiel K.L."/>
            <person name="Jhaveri J."/>
            <person name="Lu J."/>
            <person name="Miller N.M."/>
            <person name="Norton S."/>
            <person name="Chen Q."/>
            <person name="Phoolcharoen W."/>
            <person name="Ohlin V."/>
            <person name="Ondrusek D."/>
            <person name="Pride N."/>
            <person name="Stricklin S.L."/>
            <person name="Sun J."/>
            <person name="Wheeler C."/>
            <person name="Wilson L."/>
            <person name="Zhu H."/>
            <person name="Wood D.W."/>
        </authorList>
    </citation>
    <scope>NUCLEOTIDE SEQUENCE [LARGE SCALE GENOMIC DNA]</scope>
    <source>
        <strain>ATCC BAA-846 / DSM 112012 / S4</strain>
    </source>
</reference>
<accession>B9JXV6</accession>
<keyword id="KW-0028">Amino-acid biosynthesis</keyword>
<keyword id="KW-0057">Aromatic amino acid biosynthesis</keyword>
<keyword id="KW-0456">Lyase</keyword>
<keyword id="KW-0663">Pyridoxal phosphate</keyword>
<keyword id="KW-1185">Reference proteome</keyword>
<keyword id="KW-0822">Tryptophan biosynthesis</keyword>
<comment type="function">
    <text evidence="1">The beta subunit is responsible for the synthesis of L-tryptophan from indole and L-serine.</text>
</comment>
<comment type="catalytic activity">
    <reaction evidence="1">
        <text>(1S,2R)-1-C-(indol-3-yl)glycerol 3-phosphate + L-serine = D-glyceraldehyde 3-phosphate + L-tryptophan + H2O</text>
        <dbReference type="Rhea" id="RHEA:10532"/>
        <dbReference type="ChEBI" id="CHEBI:15377"/>
        <dbReference type="ChEBI" id="CHEBI:33384"/>
        <dbReference type="ChEBI" id="CHEBI:57912"/>
        <dbReference type="ChEBI" id="CHEBI:58866"/>
        <dbReference type="ChEBI" id="CHEBI:59776"/>
        <dbReference type="EC" id="4.2.1.20"/>
    </reaction>
</comment>
<comment type="cofactor">
    <cofactor evidence="1">
        <name>pyridoxal 5'-phosphate</name>
        <dbReference type="ChEBI" id="CHEBI:597326"/>
    </cofactor>
</comment>
<comment type="pathway">
    <text evidence="1">Amino-acid biosynthesis; L-tryptophan biosynthesis; L-tryptophan from chorismate: step 5/5.</text>
</comment>
<comment type="subunit">
    <text evidence="1">Tetramer of two alpha and two beta chains.</text>
</comment>
<comment type="similarity">
    <text evidence="1">Belongs to the TrpB family.</text>
</comment>
<organism>
    <name type="scientific">Allorhizobium ampelinum (strain ATCC BAA-846 / DSM 112012 / S4)</name>
    <name type="common">Agrobacterium vitis (strain S4)</name>
    <dbReference type="NCBI Taxonomy" id="311402"/>
    <lineage>
        <taxon>Bacteria</taxon>
        <taxon>Pseudomonadati</taxon>
        <taxon>Pseudomonadota</taxon>
        <taxon>Alphaproteobacteria</taxon>
        <taxon>Hyphomicrobiales</taxon>
        <taxon>Rhizobiaceae</taxon>
        <taxon>Rhizobium/Agrobacterium group</taxon>
        <taxon>Allorhizobium</taxon>
        <taxon>Allorhizobium ampelinum</taxon>
    </lineage>
</organism>
<sequence>MNQNPIPNSFRSGPDEDGRFGIFGGRFVAETLMPLILDLQAEWENAKTDPSFKAELDHLNTHYTGRPSPLYFAERLTAELGGAKIYFKRDELNHTGSHKINNCLGQILLAKRMGKTRIIAETGAGQHGVASATVAARFGLPCIVYMGATDVERQAPNVFRMKLLGAEVRPVSSGHGTLKDAMNEALRDWVTNVDETYYMIGTAAGPHPYPEMVREFQSVIGKESREQMMAAEGRLPDMLVAAVGGGSNAIGLFHPFLDDESVRMIGVEAGGKGLDGNEHCASLTAGSPGVLHGNRTYLLQDSDGQIKDGHSISAGLDYPGIGPEHSWLKDIGRVEYVPIMDTEALEAFQLLTRTEGIIPALEPSHALAEVMKRAPKMGKDEIILMNLCGRGDKDIFTVGKILGMGL</sequence>
<feature type="chain" id="PRO_1000198736" description="Tryptophan synthase beta chain">
    <location>
        <begin position="1"/>
        <end position="406"/>
    </location>
</feature>
<feature type="modified residue" description="N6-(pyridoxal phosphate)lysine" evidence="1">
    <location>
        <position position="99"/>
    </location>
</feature>
<name>TRPB_ALLAM</name>
<dbReference type="EC" id="4.2.1.20" evidence="1"/>
<dbReference type="EMBL" id="CP000633">
    <property type="protein sequence ID" value="ACM34986.1"/>
    <property type="molecule type" value="Genomic_DNA"/>
</dbReference>
<dbReference type="RefSeq" id="WP_012654516.1">
    <property type="nucleotide sequence ID" value="NC_011989.1"/>
</dbReference>
<dbReference type="SMR" id="B9JXV6"/>
<dbReference type="STRING" id="311402.Avi_0020"/>
<dbReference type="KEGG" id="avi:Avi_0020"/>
<dbReference type="eggNOG" id="COG0133">
    <property type="taxonomic scope" value="Bacteria"/>
</dbReference>
<dbReference type="HOGENOM" id="CLU_016734_3_1_5"/>
<dbReference type="UniPathway" id="UPA00035">
    <property type="reaction ID" value="UER00044"/>
</dbReference>
<dbReference type="Proteomes" id="UP000001596">
    <property type="component" value="Chromosome 1"/>
</dbReference>
<dbReference type="GO" id="GO:0005737">
    <property type="term" value="C:cytoplasm"/>
    <property type="evidence" value="ECO:0007669"/>
    <property type="project" value="TreeGrafter"/>
</dbReference>
<dbReference type="GO" id="GO:0004834">
    <property type="term" value="F:tryptophan synthase activity"/>
    <property type="evidence" value="ECO:0007669"/>
    <property type="project" value="UniProtKB-UniRule"/>
</dbReference>
<dbReference type="CDD" id="cd06446">
    <property type="entry name" value="Trp-synth_B"/>
    <property type="match status" value="1"/>
</dbReference>
<dbReference type="FunFam" id="3.40.50.1100:FF:000001">
    <property type="entry name" value="Tryptophan synthase beta chain"/>
    <property type="match status" value="1"/>
</dbReference>
<dbReference type="FunFam" id="3.40.50.1100:FF:000004">
    <property type="entry name" value="Tryptophan synthase beta chain"/>
    <property type="match status" value="1"/>
</dbReference>
<dbReference type="Gene3D" id="3.40.50.1100">
    <property type="match status" value="2"/>
</dbReference>
<dbReference type="HAMAP" id="MF_00133">
    <property type="entry name" value="Trp_synth_beta"/>
    <property type="match status" value="1"/>
</dbReference>
<dbReference type="InterPro" id="IPR006653">
    <property type="entry name" value="Trp_synth_b_CS"/>
</dbReference>
<dbReference type="InterPro" id="IPR006654">
    <property type="entry name" value="Trp_synth_beta"/>
</dbReference>
<dbReference type="InterPro" id="IPR023026">
    <property type="entry name" value="Trp_synth_beta/beta-like"/>
</dbReference>
<dbReference type="InterPro" id="IPR001926">
    <property type="entry name" value="TrpB-like_PALP"/>
</dbReference>
<dbReference type="InterPro" id="IPR036052">
    <property type="entry name" value="TrpB-like_PALP_sf"/>
</dbReference>
<dbReference type="NCBIfam" id="TIGR00263">
    <property type="entry name" value="trpB"/>
    <property type="match status" value="1"/>
</dbReference>
<dbReference type="PANTHER" id="PTHR48077:SF3">
    <property type="entry name" value="TRYPTOPHAN SYNTHASE"/>
    <property type="match status" value="1"/>
</dbReference>
<dbReference type="PANTHER" id="PTHR48077">
    <property type="entry name" value="TRYPTOPHAN SYNTHASE-RELATED"/>
    <property type="match status" value="1"/>
</dbReference>
<dbReference type="Pfam" id="PF00291">
    <property type="entry name" value="PALP"/>
    <property type="match status" value="1"/>
</dbReference>
<dbReference type="PIRSF" id="PIRSF001413">
    <property type="entry name" value="Trp_syn_beta"/>
    <property type="match status" value="1"/>
</dbReference>
<dbReference type="SUPFAM" id="SSF53686">
    <property type="entry name" value="Tryptophan synthase beta subunit-like PLP-dependent enzymes"/>
    <property type="match status" value="1"/>
</dbReference>
<dbReference type="PROSITE" id="PS00168">
    <property type="entry name" value="TRP_SYNTHASE_BETA"/>
    <property type="match status" value="1"/>
</dbReference>
<proteinExistence type="inferred from homology"/>